<evidence type="ECO:0000255" key="1">
    <source>
        <dbReference type="HAMAP-Rule" id="MF_00113"/>
    </source>
</evidence>
<sequence length="373" mass="40521">MRVDLFDFDLPDERIALRPAEPRDSARLLVVNPHAESGPHAESVPHAESALSDHHVYDLPSFLRAGDALVFNDTKVIPAQLEGIRHRDGAGGQQVSATLHMRIGPSRWKAFAKPGKRIKEGDRIAFGHSGESCFLGALDATVEEKGEAGEVTLAFDLTGPALDEAIAAVGHIPLPPYIAAKRPEDERDRADYQTIYAREEGAVAAPTAGLHFTPDLFAALDKAGIERHFVTLHVGAGTFLPVKADDTDDHKMHLESGYVSAEIAARLNAVKARGGRIVCVGTTSLRLIESAAGEDGKIKPWAGATGIFITPGYRFKAVDMLMTNFHLPRSTLFMLVSAFSGFETMRAAYEHAISTGYRFYSYGDASLLFRKDK</sequence>
<accession>B3PZR1</accession>
<comment type="function">
    <text evidence="1">Transfers and isomerizes the ribose moiety from AdoMet to the 7-aminomethyl group of 7-deazaguanine (preQ1-tRNA) to give epoxyqueuosine (oQ-tRNA).</text>
</comment>
<comment type="catalytic activity">
    <reaction evidence="1">
        <text>7-aminomethyl-7-carbaguanosine(34) in tRNA + S-adenosyl-L-methionine = epoxyqueuosine(34) in tRNA + adenine + L-methionine + 2 H(+)</text>
        <dbReference type="Rhea" id="RHEA:32155"/>
        <dbReference type="Rhea" id="RHEA-COMP:10342"/>
        <dbReference type="Rhea" id="RHEA-COMP:18582"/>
        <dbReference type="ChEBI" id="CHEBI:15378"/>
        <dbReference type="ChEBI" id="CHEBI:16708"/>
        <dbReference type="ChEBI" id="CHEBI:57844"/>
        <dbReference type="ChEBI" id="CHEBI:59789"/>
        <dbReference type="ChEBI" id="CHEBI:82833"/>
        <dbReference type="ChEBI" id="CHEBI:194443"/>
        <dbReference type="EC" id="2.4.99.17"/>
    </reaction>
</comment>
<comment type="pathway">
    <text evidence="1">tRNA modification; tRNA-queuosine biosynthesis.</text>
</comment>
<comment type="subunit">
    <text evidence="1">Monomer.</text>
</comment>
<comment type="subcellular location">
    <subcellularLocation>
        <location evidence="1">Cytoplasm</location>
    </subcellularLocation>
</comment>
<comment type="similarity">
    <text evidence="1">Belongs to the QueA family.</text>
</comment>
<keyword id="KW-0963">Cytoplasm</keyword>
<keyword id="KW-0671">Queuosine biosynthesis</keyword>
<keyword id="KW-0949">S-adenosyl-L-methionine</keyword>
<keyword id="KW-0808">Transferase</keyword>
<gene>
    <name evidence="1" type="primary">queA</name>
    <name type="ordered locus">RHECIAT_CH0002168</name>
</gene>
<protein>
    <recommendedName>
        <fullName evidence="1">S-adenosylmethionine:tRNA ribosyltransferase-isomerase</fullName>
        <ecNumber evidence="1">2.4.99.17</ecNumber>
    </recommendedName>
    <alternativeName>
        <fullName evidence="1">Queuosine biosynthesis protein QueA</fullName>
    </alternativeName>
</protein>
<reference key="1">
    <citation type="journal article" date="2010" name="Appl. Environ. Microbiol.">
        <title>Conserved symbiotic plasmid DNA sequences in the multireplicon pangenomic structure of Rhizobium etli.</title>
        <authorList>
            <person name="Gonzalez V."/>
            <person name="Acosta J.L."/>
            <person name="Santamaria R.I."/>
            <person name="Bustos P."/>
            <person name="Fernandez J.L."/>
            <person name="Hernandez Gonzalez I.L."/>
            <person name="Diaz R."/>
            <person name="Flores M."/>
            <person name="Palacios R."/>
            <person name="Mora J."/>
            <person name="Davila G."/>
        </authorList>
    </citation>
    <scope>NUCLEOTIDE SEQUENCE [LARGE SCALE GENOMIC DNA]</scope>
    <source>
        <strain>CIAT 652</strain>
    </source>
</reference>
<name>QUEA_RHIE6</name>
<dbReference type="EC" id="2.4.99.17" evidence="1"/>
<dbReference type="EMBL" id="CP001074">
    <property type="protein sequence ID" value="ACE91126.1"/>
    <property type="molecule type" value="Genomic_DNA"/>
</dbReference>
<dbReference type="SMR" id="B3PZR1"/>
<dbReference type="KEGG" id="rec:RHECIAT_CH0002168"/>
<dbReference type="eggNOG" id="COG0809">
    <property type="taxonomic scope" value="Bacteria"/>
</dbReference>
<dbReference type="HOGENOM" id="CLU_039110_1_1_5"/>
<dbReference type="UniPathway" id="UPA00392"/>
<dbReference type="Proteomes" id="UP000008817">
    <property type="component" value="Chromosome"/>
</dbReference>
<dbReference type="GO" id="GO:0005737">
    <property type="term" value="C:cytoplasm"/>
    <property type="evidence" value="ECO:0007669"/>
    <property type="project" value="UniProtKB-SubCell"/>
</dbReference>
<dbReference type="GO" id="GO:0051075">
    <property type="term" value="F:S-adenosylmethionine:tRNA ribosyltransferase-isomerase activity"/>
    <property type="evidence" value="ECO:0007669"/>
    <property type="project" value="UniProtKB-EC"/>
</dbReference>
<dbReference type="GO" id="GO:0008616">
    <property type="term" value="P:queuosine biosynthetic process"/>
    <property type="evidence" value="ECO:0007669"/>
    <property type="project" value="UniProtKB-UniRule"/>
</dbReference>
<dbReference type="GO" id="GO:0002099">
    <property type="term" value="P:tRNA wobble guanine modification"/>
    <property type="evidence" value="ECO:0007669"/>
    <property type="project" value="TreeGrafter"/>
</dbReference>
<dbReference type="FunFam" id="3.40.1780.10:FF:000001">
    <property type="entry name" value="S-adenosylmethionine:tRNA ribosyltransferase-isomerase"/>
    <property type="match status" value="1"/>
</dbReference>
<dbReference type="Gene3D" id="2.40.10.240">
    <property type="entry name" value="QueA-like"/>
    <property type="match status" value="1"/>
</dbReference>
<dbReference type="Gene3D" id="3.40.1780.10">
    <property type="entry name" value="QueA-like"/>
    <property type="match status" value="1"/>
</dbReference>
<dbReference type="HAMAP" id="MF_00113">
    <property type="entry name" value="QueA"/>
    <property type="match status" value="1"/>
</dbReference>
<dbReference type="InterPro" id="IPR003699">
    <property type="entry name" value="QueA"/>
</dbReference>
<dbReference type="InterPro" id="IPR042118">
    <property type="entry name" value="QueA_dom1"/>
</dbReference>
<dbReference type="InterPro" id="IPR042119">
    <property type="entry name" value="QueA_dom2"/>
</dbReference>
<dbReference type="InterPro" id="IPR036100">
    <property type="entry name" value="QueA_sf"/>
</dbReference>
<dbReference type="NCBIfam" id="NF001140">
    <property type="entry name" value="PRK00147.1"/>
    <property type="match status" value="1"/>
</dbReference>
<dbReference type="NCBIfam" id="TIGR00113">
    <property type="entry name" value="queA"/>
    <property type="match status" value="1"/>
</dbReference>
<dbReference type="PANTHER" id="PTHR30307">
    <property type="entry name" value="S-ADENOSYLMETHIONINE:TRNA RIBOSYLTRANSFERASE-ISOMERASE"/>
    <property type="match status" value="1"/>
</dbReference>
<dbReference type="PANTHER" id="PTHR30307:SF0">
    <property type="entry name" value="S-ADENOSYLMETHIONINE:TRNA RIBOSYLTRANSFERASE-ISOMERASE"/>
    <property type="match status" value="1"/>
</dbReference>
<dbReference type="Pfam" id="PF02547">
    <property type="entry name" value="Queuosine_synth"/>
    <property type="match status" value="1"/>
</dbReference>
<dbReference type="SUPFAM" id="SSF111337">
    <property type="entry name" value="QueA-like"/>
    <property type="match status" value="1"/>
</dbReference>
<feature type="chain" id="PRO_1000094806" description="S-adenosylmethionine:tRNA ribosyltransferase-isomerase">
    <location>
        <begin position="1"/>
        <end position="373"/>
    </location>
</feature>
<organism>
    <name type="scientific">Rhizobium etli (strain CIAT 652)</name>
    <dbReference type="NCBI Taxonomy" id="491916"/>
    <lineage>
        <taxon>Bacteria</taxon>
        <taxon>Pseudomonadati</taxon>
        <taxon>Pseudomonadota</taxon>
        <taxon>Alphaproteobacteria</taxon>
        <taxon>Hyphomicrobiales</taxon>
        <taxon>Rhizobiaceae</taxon>
        <taxon>Rhizobium/Agrobacterium group</taxon>
        <taxon>Rhizobium</taxon>
    </lineage>
</organism>
<proteinExistence type="inferred from homology"/>